<reference key="1">
    <citation type="journal article" date="2005" name="BMC Genomics">
        <title>Bacterial genome adaptation to niches: divergence of the potential virulence genes in three Burkholderia species of different survival strategies.</title>
        <authorList>
            <person name="Kim H.S."/>
            <person name="Schell M.A."/>
            <person name="Yu Y."/>
            <person name="Ulrich R.L."/>
            <person name="Sarria S.H."/>
            <person name="Nierman W.C."/>
            <person name="DeShazer D."/>
        </authorList>
    </citation>
    <scope>NUCLEOTIDE SEQUENCE [LARGE SCALE GENOMIC DNA]</scope>
    <source>
        <strain>ATCC 700388 / DSM 13276 / CCUG 48851 / CIP 106301 / E264</strain>
    </source>
</reference>
<evidence type="ECO:0000255" key="1">
    <source>
        <dbReference type="HAMAP-Rule" id="MF_00046"/>
    </source>
</evidence>
<protein>
    <recommendedName>
        <fullName evidence="1">UDP-N-acetylmuramate--L-alanine ligase</fullName>
        <ecNumber evidence="1">6.3.2.8</ecNumber>
    </recommendedName>
    <alternativeName>
        <fullName evidence="1">UDP-N-acetylmuramoyl-L-alanine synthetase</fullName>
    </alternativeName>
</protein>
<feature type="chain" id="PRO_0000242549" description="UDP-N-acetylmuramate--L-alanine ligase">
    <location>
        <begin position="1"/>
        <end position="465"/>
    </location>
</feature>
<feature type="binding site" evidence="1">
    <location>
        <begin position="112"/>
        <end position="118"/>
    </location>
    <ligand>
        <name>ATP</name>
        <dbReference type="ChEBI" id="CHEBI:30616"/>
    </ligand>
</feature>
<sequence>MKHIVKHIHFVGIGGAGMSGIAEVLVNLGYQVSGSDLARNAVTERLEALGARVSIGHDAANIEGANAVVVSTAVRSDNPEVLAARRLRVPIVPRAVMLAELMRLKQGIAIAGTHGKTTTTSLVASVLAAGGLDPTFVIGGRLTSAGANARLGTGDFIVAEADESDASFLNLYPVIEVITNIDADHMDTYGHDFARLKQAFIEFTQRLPFYGSAVVCIDDPNVRQIVPLISKPVVRYGFAADAQVRAENVEARDGRMHFTVLREGREPLPVVLNLPGLHNVQNALAAIAIATDLDVADTAIQQALAEFNGVGRRFQRYGEMPAAGGGAYTLIDDYGHHPVEMAATIAAARGAFPGRRLVLAFQPHRYTRTRDCFDDFVNVLSTVDALVLTEVYAAGEAPISTANGDALSRALRAAGKVEPVFVATVDEVPDALAKLARAGDVVITMGAGSIGGVPGKLAQDTQQKG</sequence>
<proteinExistence type="inferred from homology"/>
<name>MURC_BURTA</name>
<organism>
    <name type="scientific">Burkholderia thailandensis (strain ATCC 700388 / DSM 13276 / CCUG 48851 / CIP 106301 / E264)</name>
    <dbReference type="NCBI Taxonomy" id="271848"/>
    <lineage>
        <taxon>Bacteria</taxon>
        <taxon>Pseudomonadati</taxon>
        <taxon>Pseudomonadota</taxon>
        <taxon>Betaproteobacteria</taxon>
        <taxon>Burkholderiales</taxon>
        <taxon>Burkholderiaceae</taxon>
        <taxon>Burkholderia</taxon>
        <taxon>pseudomallei group</taxon>
    </lineage>
</organism>
<dbReference type="EC" id="6.3.2.8" evidence="1"/>
<dbReference type="EMBL" id="CP000086">
    <property type="protein sequence ID" value="ABC39437.1"/>
    <property type="molecule type" value="Genomic_DNA"/>
</dbReference>
<dbReference type="RefSeq" id="WP_009888782.1">
    <property type="nucleotide sequence ID" value="NZ_CP008785.1"/>
</dbReference>
<dbReference type="SMR" id="Q2SZI2"/>
<dbReference type="GeneID" id="45120871"/>
<dbReference type="KEGG" id="bte:BTH_I1119"/>
<dbReference type="HOGENOM" id="CLU_028104_2_2_4"/>
<dbReference type="UniPathway" id="UPA00219"/>
<dbReference type="Proteomes" id="UP000001930">
    <property type="component" value="Chromosome I"/>
</dbReference>
<dbReference type="GO" id="GO:0005737">
    <property type="term" value="C:cytoplasm"/>
    <property type="evidence" value="ECO:0007669"/>
    <property type="project" value="UniProtKB-SubCell"/>
</dbReference>
<dbReference type="GO" id="GO:0005524">
    <property type="term" value="F:ATP binding"/>
    <property type="evidence" value="ECO:0007669"/>
    <property type="project" value="UniProtKB-UniRule"/>
</dbReference>
<dbReference type="GO" id="GO:0008763">
    <property type="term" value="F:UDP-N-acetylmuramate-L-alanine ligase activity"/>
    <property type="evidence" value="ECO:0007669"/>
    <property type="project" value="UniProtKB-UniRule"/>
</dbReference>
<dbReference type="GO" id="GO:0051301">
    <property type="term" value="P:cell division"/>
    <property type="evidence" value="ECO:0007669"/>
    <property type="project" value="UniProtKB-KW"/>
</dbReference>
<dbReference type="GO" id="GO:0071555">
    <property type="term" value="P:cell wall organization"/>
    <property type="evidence" value="ECO:0007669"/>
    <property type="project" value="UniProtKB-KW"/>
</dbReference>
<dbReference type="GO" id="GO:0009252">
    <property type="term" value="P:peptidoglycan biosynthetic process"/>
    <property type="evidence" value="ECO:0007669"/>
    <property type="project" value="UniProtKB-UniRule"/>
</dbReference>
<dbReference type="GO" id="GO:0008360">
    <property type="term" value="P:regulation of cell shape"/>
    <property type="evidence" value="ECO:0007669"/>
    <property type="project" value="UniProtKB-KW"/>
</dbReference>
<dbReference type="FunFam" id="3.40.1190.10:FF:000001">
    <property type="entry name" value="UDP-N-acetylmuramate--L-alanine ligase"/>
    <property type="match status" value="1"/>
</dbReference>
<dbReference type="Gene3D" id="3.90.190.20">
    <property type="entry name" value="Mur ligase, C-terminal domain"/>
    <property type="match status" value="1"/>
</dbReference>
<dbReference type="Gene3D" id="3.40.1190.10">
    <property type="entry name" value="Mur-like, catalytic domain"/>
    <property type="match status" value="1"/>
</dbReference>
<dbReference type="Gene3D" id="3.40.50.720">
    <property type="entry name" value="NAD(P)-binding Rossmann-like Domain"/>
    <property type="match status" value="1"/>
</dbReference>
<dbReference type="HAMAP" id="MF_00046">
    <property type="entry name" value="MurC"/>
    <property type="match status" value="1"/>
</dbReference>
<dbReference type="InterPro" id="IPR036565">
    <property type="entry name" value="Mur-like_cat_sf"/>
</dbReference>
<dbReference type="InterPro" id="IPR004101">
    <property type="entry name" value="Mur_ligase_C"/>
</dbReference>
<dbReference type="InterPro" id="IPR036615">
    <property type="entry name" value="Mur_ligase_C_dom_sf"/>
</dbReference>
<dbReference type="InterPro" id="IPR013221">
    <property type="entry name" value="Mur_ligase_cen"/>
</dbReference>
<dbReference type="InterPro" id="IPR000713">
    <property type="entry name" value="Mur_ligase_N"/>
</dbReference>
<dbReference type="InterPro" id="IPR050061">
    <property type="entry name" value="MurCDEF_pg_biosynth"/>
</dbReference>
<dbReference type="InterPro" id="IPR005758">
    <property type="entry name" value="UDP-N-AcMur_Ala_ligase_MurC"/>
</dbReference>
<dbReference type="NCBIfam" id="TIGR01082">
    <property type="entry name" value="murC"/>
    <property type="match status" value="1"/>
</dbReference>
<dbReference type="PANTHER" id="PTHR43445:SF3">
    <property type="entry name" value="UDP-N-ACETYLMURAMATE--L-ALANINE LIGASE"/>
    <property type="match status" value="1"/>
</dbReference>
<dbReference type="PANTHER" id="PTHR43445">
    <property type="entry name" value="UDP-N-ACETYLMURAMATE--L-ALANINE LIGASE-RELATED"/>
    <property type="match status" value="1"/>
</dbReference>
<dbReference type="Pfam" id="PF01225">
    <property type="entry name" value="Mur_ligase"/>
    <property type="match status" value="1"/>
</dbReference>
<dbReference type="Pfam" id="PF02875">
    <property type="entry name" value="Mur_ligase_C"/>
    <property type="match status" value="1"/>
</dbReference>
<dbReference type="Pfam" id="PF08245">
    <property type="entry name" value="Mur_ligase_M"/>
    <property type="match status" value="1"/>
</dbReference>
<dbReference type="SUPFAM" id="SSF51984">
    <property type="entry name" value="MurCD N-terminal domain"/>
    <property type="match status" value="1"/>
</dbReference>
<dbReference type="SUPFAM" id="SSF53623">
    <property type="entry name" value="MurD-like peptide ligases, catalytic domain"/>
    <property type="match status" value="1"/>
</dbReference>
<dbReference type="SUPFAM" id="SSF53244">
    <property type="entry name" value="MurD-like peptide ligases, peptide-binding domain"/>
    <property type="match status" value="1"/>
</dbReference>
<keyword id="KW-0067">ATP-binding</keyword>
<keyword id="KW-0131">Cell cycle</keyword>
<keyword id="KW-0132">Cell division</keyword>
<keyword id="KW-0133">Cell shape</keyword>
<keyword id="KW-0961">Cell wall biogenesis/degradation</keyword>
<keyword id="KW-0963">Cytoplasm</keyword>
<keyword id="KW-0436">Ligase</keyword>
<keyword id="KW-0547">Nucleotide-binding</keyword>
<keyword id="KW-0573">Peptidoglycan synthesis</keyword>
<gene>
    <name evidence="1" type="primary">murC</name>
    <name type="ordered locus">BTH_I1119</name>
</gene>
<accession>Q2SZI2</accession>
<comment type="function">
    <text evidence="1">Cell wall formation.</text>
</comment>
<comment type="catalytic activity">
    <reaction evidence="1">
        <text>UDP-N-acetyl-alpha-D-muramate + L-alanine + ATP = UDP-N-acetyl-alpha-D-muramoyl-L-alanine + ADP + phosphate + H(+)</text>
        <dbReference type="Rhea" id="RHEA:23372"/>
        <dbReference type="ChEBI" id="CHEBI:15378"/>
        <dbReference type="ChEBI" id="CHEBI:30616"/>
        <dbReference type="ChEBI" id="CHEBI:43474"/>
        <dbReference type="ChEBI" id="CHEBI:57972"/>
        <dbReference type="ChEBI" id="CHEBI:70757"/>
        <dbReference type="ChEBI" id="CHEBI:83898"/>
        <dbReference type="ChEBI" id="CHEBI:456216"/>
        <dbReference type="EC" id="6.3.2.8"/>
    </reaction>
</comment>
<comment type="pathway">
    <text evidence="1">Cell wall biogenesis; peptidoglycan biosynthesis.</text>
</comment>
<comment type="subcellular location">
    <subcellularLocation>
        <location evidence="1">Cytoplasm</location>
    </subcellularLocation>
</comment>
<comment type="similarity">
    <text evidence="1">Belongs to the MurCDEF family.</text>
</comment>